<evidence type="ECO:0000250" key="1"/>
<evidence type="ECO:0000255" key="2"/>
<evidence type="ECO:0000255" key="3">
    <source>
        <dbReference type="PROSITE-ProRule" id="PRU01210"/>
    </source>
</evidence>
<evidence type="ECO:0000305" key="4"/>
<comment type="function">
    <text evidence="1">Binds voltage-independently at site-4 of sodium channels (Nav) and shift the voltage of activation toward more negative potentials thereby affecting sodium channel activation and promoting spontaneous and repetitive firing.</text>
</comment>
<comment type="subcellular location">
    <subcellularLocation>
        <location evidence="1">Secreted</location>
    </subcellularLocation>
</comment>
<comment type="tissue specificity">
    <text>Expressed by the venom gland.</text>
</comment>
<comment type="domain">
    <text evidence="4">Has the structural arrangement of an alpha-helix connected to antiparallel beta-sheets by disulfide bonds (CS-alpha/beta).</text>
</comment>
<comment type="similarity">
    <text evidence="4">Belongs to the long (4 C-C) scorpion toxin superfamily. Sodium channel inhibitor family. Beta subfamily.</text>
</comment>
<keyword id="KW-1015">Disulfide bond</keyword>
<keyword id="KW-0872">Ion channel impairing toxin</keyword>
<keyword id="KW-0528">Neurotoxin</keyword>
<keyword id="KW-0964">Secreted</keyword>
<keyword id="KW-0732">Signal</keyword>
<keyword id="KW-0800">Toxin</keyword>
<keyword id="KW-0738">Voltage-gated sodium channel impairing toxin</keyword>
<reference key="1">
    <citation type="journal article" date="2010" name="BMC Genomics">
        <title>Comparative venom gland transcriptome analysis of the scorpion Lychas mucronatus reveals intraspecific toxic gene diversity and new venomous components.</title>
        <authorList>
            <person name="Zhao R."/>
            <person name="Ma Y."/>
            <person name="He Y."/>
            <person name="Di Z."/>
            <person name="Wu Y.-L."/>
            <person name="Cao Z.-J."/>
            <person name="Li W.-X."/>
        </authorList>
    </citation>
    <scope>NUCLEOTIDE SEQUENCE [MRNA]</scope>
    <source>
        <strain>Hainan</strain>
        <tissue>Venom gland</tissue>
    </source>
</reference>
<proteinExistence type="evidence at transcript level"/>
<dbReference type="EMBL" id="EU159292">
    <property type="protein sequence ID" value="ABX76765.1"/>
    <property type="molecule type" value="mRNA"/>
</dbReference>
<dbReference type="SMR" id="D9U2A1"/>
<dbReference type="GO" id="GO:0005576">
    <property type="term" value="C:extracellular region"/>
    <property type="evidence" value="ECO:0007669"/>
    <property type="project" value="UniProtKB-SubCell"/>
</dbReference>
<dbReference type="GO" id="GO:0019871">
    <property type="term" value="F:sodium channel inhibitor activity"/>
    <property type="evidence" value="ECO:0007669"/>
    <property type="project" value="InterPro"/>
</dbReference>
<dbReference type="GO" id="GO:0090729">
    <property type="term" value="F:toxin activity"/>
    <property type="evidence" value="ECO:0007669"/>
    <property type="project" value="UniProtKB-KW"/>
</dbReference>
<dbReference type="GO" id="GO:0006952">
    <property type="term" value="P:defense response"/>
    <property type="evidence" value="ECO:0007669"/>
    <property type="project" value="InterPro"/>
</dbReference>
<dbReference type="CDD" id="cd23106">
    <property type="entry name" value="neurotoxins_LC_scorpion"/>
    <property type="match status" value="1"/>
</dbReference>
<dbReference type="Gene3D" id="3.30.30.10">
    <property type="entry name" value="Knottin, scorpion toxin-like"/>
    <property type="match status" value="1"/>
</dbReference>
<dbReference type="InterPro" id="IPR044062">
    <property type="entry name" value="LCN-type_CS_alpha_beta_dom"/>
</dbReference>
<dbReference type="InterPro" id="IPR003614">
    <property type="entry name" value="Scorpion_toxin-like"/>
</dbReference>
<dbReference type="InterPro" id="IPR036574">
    <property type="entry name" value="Scorpion_toxin-like_sf"/>
</dbReference>
<dbReference type="InterPro" id="IPR018218">
    <property type="entry name" value="Scorpion_toxinL"/>
</dbReference>
<dbReference type="InterPro" id="IPR002061">
    <property type="entry name" value="Scorpion_toxinL/defensin"/>
</dbReference>
<dbReference type="Pfam" id="PF00537">
    <property type="entry name" value="Toxin_3"/>
    <property type="match status" value="1"/>
</dbReference>
<dbReference type="PRINTS" id="PR00285">
    <property type="entry name" value="SCORPNTOXIN"/>
</dbReference>
<dbReference type="SMART" id="SM00505">
    <property type="entry name" value="Knot1"/>
    <property type="match status" value="1"/>
</dbReference>
<dbReference type="SUPFAM" id="SSF57095">
    <property type="entry name" value="Scorpion toxin-like"/>
    <property type="match status" value="1"/>
</dbReference>
<dbReference type="PROSITE" id="PS51863">
    <property type="entry name" value="LCN_CSAB"/>
    <property type="match status" value="1"/>
</dbReference>
<protein>
    <recommendedName>
        <fullName>Neurotoxin LmNaTx17</fullName>
    </recommendedName>
</protein>
<name>SNA17_LYCMC</name>
<feature type="signal peptide" evidence="2">
    <location>
        <begin position="1"/>
        <end position="18"/>
    </location>
</feature>
<feature type="chain" id="PRO_0000403819" description="Neurotoxin LmNaTx17">
    <location>
        <begin position="19"/>
        <end position="86"/>
    </location>
</feature>
<feature type="domain" description="LCN-type CS-alpha/beta" evidence="3">
    <location>
        <begin position="19"/>
        <end position="85"/>
    </location>
</feature>
<feature type="disulfide bond" evidence="3">
    <location>
        <begin position="33"/>
        <end position="84"/>
    </location>
</feature>
<feature type="disulfide bond" evidence="3">
    <location>
        <begin position="37"/>
        <end position="58"/>
    </location>
</feature>
<feature type="disulfide bond" evidence="3">
    <location>
        <begin position="44"/>
        <end position="65"/>
    </location>
</feature>
<feature type="disulfide bond" evidence="3">
    <location>
        <begin position="48"/>
        <end position="67"/>
    </location>
</feature>
<accession>D9U2A1</accession>
<sequence length="86" mass="9755">MKILFVIVLAAFFIGVHCKHGYPVQYSGREKGCKIACVINNASCDGECKRRGGRAGYCYFWKLACFCEYLPNNSPTWDYKTGKCRV</sequence>
<organism>
    <name type="scientific">Lychas mucronatus</name>
    <name type="common">Chinese swimming scorpion</name>
    <dbReference type="NCBI Taxonomy" id="172552"/>
    <lineage>
        <taxon>Eukaryota</taxon>
        <taxon>Metazoa</taxon>
        <taxon>Ecdysozoa</taxon>
        <taxon>Arthropoda</taxon>
        <taxon>Chelicerata</taxon>
        <taxon>Arachnida</taxon>
        <taxon>Scorpiones</taxon>
        <taxon>Buthida</taxon>
        <taxon>Buthoidea</taxon>
        <taxon>Buthidae</taxon>
        <taxon>Lychas</taxon>
    </lineage>
</organism>